<comment type="similarity">
    <text evidence="1">Belongs to the UPF0225 family.</text>
</comment>
<gene>
    <name type="ordered locus">PMI1492</name>
</gene>
<evidence type="ECO:0000255" key="1">
    <source>
        <dbReference type="HAMAP-Rule" id="MF_00612"/>
    </source>
</evidence>
<organism>
    <name type="scientific">Proteus mirabilis (strain HI4320)</name>
    <dbReference type="NCBI Taxonomy" id="529507"/>
    <lineage>
        <taxon>Bacteria</taxon>
        <taxon>Pseudomonadati</taxon>
        <taxon>Pseudomonadota</taxon>
        <taxon>Gammaproteobacteria</taxon>
        <taxon>Enterobacterales</taxon>
        <taxon>Morganellaceae</taxon>
        <taxon>Proteus</taxon>
    </lineage>
</organism>
<sequence length="157" mass="18076">MSNLCPCNSQLPYSECCEPYLLGTKNAPTAQALMRSRYSAFVTHNADHLIKTWHPSCRTPSLRDELIATFPNTQWLGLHIISAQENPRDNEAFVEFSACFIEINADDKQYLHERSRFLKIDDCWFYIDGVQPKVGRNDPCPCGSGRKYKKCCEHNRK</sequence>
<proteinExistence type="inferred from homology"/>
<name>Y1492_PROMH</name>
<dbReference type="EMBL" id="AM942759">
    <property type="protein sequence ID" value="CAR43131.1"/>
    <property type="molecule type" value="Genomic_DNA"/>
</dbReference>
<dbReference type="SMR" id="B4EXS5"/>
<dbReference type="EnsemblBacteria" id="CAR43131">
    <property type="protein sequence ID" value="CAR43131"/>
    <property type="gene ID" value="PMI1492"/>
</dbReference>
<dbReference type="KEGG" id="pmr:PMI1492"/>
<dbReference type="eggNOG" id="COG3012">
    <property type="taxonomic scope" value="Bacteria"/>
</dbReference>
<dbReference type="HOGENOM" id="CLU_099590_0_0_6"/>
<dbReference type="Proteomes" id="UP000008319">
    <property type="component" value="Chromosome"/>
</dbReference>
<dbReference type="Gene3D" id="3.10.450.50">
    <property type="match status" value="1"/>
</dbReference>
<dbReference type="HAMAP" id="MF_00612">
    <property type="entry name" value="UPF0225"/>
    <property type="match status" value="1"/>
</dbReference>
<dbReference type="InterPro" id="IPR032710">
    <property type="entry name" value="NTF2-like_dom_sf"/>
</dbReference>
<dbReference type="InterPro" id="IPR004027">
    <property type="entry name" value="SEC_C_motif"/>
</dbReference>
<dbReference type="InterPro" id="IPR023006">
    <property type="entry name" value="UPF0225"/>
</dbReference>
<dbReference type="InterPro" id="IPR048469">
    <property type="entry name" value="YchJ-like_M"/>
</dbReference>
<dbReference type="NCBIfam" id="NF002449">
    <property type="entry name" value="PRK01617.1"/>
    <property type="match status" value="1"/>
</dbReference>
<dbReference type="NCBIfam" id="NF002486">
    <property type="entry name" value="PRK01752.1"/>
    <property type="match status" value="1"/>
</dbReference>
<dbReference type="PANTHER" id="PTHR33747:SF1">
    <property type="entry name" value="ADENYLATE CYCLASE-ASSOCIATED CAP C-TERMINAL DOMAIN-CONTAINING PROTEIN"/>
    <property type="match status" value="1"/>
</dbReference>
<dbReference type="PANTHER" id="PTHR33747">
    <property type="entry name" value="UPF0225 PROTEIN SCO1677"/>
    <property type="match status" value="1"/>
</dbReference>
<dbReference type="Pfam" id="PF02810">
    <property type="entry name" value="SEC-C"/>
    <property type="match status" value="2"/>
</dbReference>
<dbReference type="Pfam" id="PF17775">
    <property type="entry name" value="YchJ_M-like"/>
    <property type="match status" value="1"/>
</dbReference>
<dbReference type="SUPFAM" id="SSF54427">
    <property type="entry name" value="NTF2-like"/>
    <property type="match status" value="1"/>
</dbReference>
<dbReference type="SUPFAM" id="SSF103642">
    <property type="entry name" value="Sec-C motif"/>
    <property type="match status" value="1"/>
</dbReference>
<protein>
    <recommendedName>
        <fullName evidence="1">UPF0225 protein PMI1492</fullName>
    </recommendedName>
</protein>
<accession>B4EXS5</accession>
<reference key="1">
    <citation type="journal article" date="2008" name="J. Bacteriol.">
        <title>Complete genome sequence of uropathogenic Proteus mirabilis, a master of both adherence and motility.</title>
        <authorList>
            <person name="Pearson M.M."/>
            <person name="Sebaihia M."/>
            <person name="Churcher C."/>
            <person name="Quail M.A."/>
            <person name="Seshasayee A.S."/>
            <person name="Luscombe N.M."/>
            <person name="Abdellah Z."/>
            <person name="Arrosmith C."/>
            <person name="Atkin B."/>
            <person name="Chillingworth T."/>
            <person name="Hauser H."/>
            <person name="Jagels K."/>
            <person name="Moule S."/>
            <person name="Mungall K."/>
            <person name="Norbertczak H."/>
            <person name="Rabbinowitsch E."/>
            <person name="Walker D."/>
            <person name="Whithead S."/>
            <person name="Thomson N.R."/>
            <person name="Rather P.N."/>
            <person name="Parkhill J."/>
            <person name="Mobley H.L.T."/>
        </authorList>
    </citation>
    <scope>NUCLEOTIDE SEQUENCE [LARGE SCALE GENOMIC DNA]</scope>
    <source>
        <strain>HI4320</strain>
    </source>
</reference>
<keyword id="KW-1185">Reference proteome</keyword>
<feature type="chain" id="PRO_1000130389" description="UPF0225 protein PMI1492">
    <location>
        <begin position="1"/>
        <end position="157"/>
    </location>
</feature>